<protein>
    <recommendedName>
        <fullName evidence="1">Citrate lyase acyl carrier protein</fullName>
    </recommendedName>
    <alternativeName>
        <fullName evidence="1">Citrate lyase gamma chain</fullName>
    </alternativeName>
</protein>
<accession>A6T4H4</accession>
<proteinExistence type="inferred from homology"/>
<dbReference type="EMBL" id="CP000647">
    <property type="protein sequence ID" value="ABR75495.1"/>
    <property type="molecule type" value="Genomic_DNA"/>
</dbReference>
<dbReference type="RefSeq" id="WP_004151373.1">
    <property type="nucleotide sequence ID" value="NC_009648.1"/>
</dbReference>
<dbReference type="SMR" id="A6T4H4"/>
<dbReference type="STRING" id="272620.KPN_00035"/>
<dbReference type="PaxDb" id="272620-KPN_00035"/>
<dbReference type="EnsemblBacteria" id="ABR75495">
    <property type="protein sequence ID" value="ABR75495"/>
    <property type="gene ID" value="KPN_00035"/>
</dbReference>
<dbReference type="KEGG" id="kpn:KPN_00035"/>
<dbReference type="HOGENOM" id="CLU_158489_0_0_6"/>
<dbReference type="Proteomes" id="UP000000265">
    <property type="component" value="Chromosome"/>
</dbReference>
<dbReference type="GO" id="GO:0005737">
    <property type="term" value="C:cytoplasm"/>
    <property type="evidence" value="ECO:0007669"/>
    <property type="project" value="UniProtKB-SubCell"/>
</dbReference>
<dbReference type="HAMAP" id="MF_00805">
    <property type="entry name" value="CitD"/>
    <property type="match status" value="1"/>
</dbReference>
<dbReference type="InterPro" id="IPR006495">
    <property type="entry name" value="CitD"/>
</dbReference>
<dbReference type="InterPro" id="IPR023439">
    <property type="entry name" value="Mal_deCO2ase/Cit_lyase_ACP"/>
</dbReference>
<dbReference type="NCBIfam" id="TIGR01608">
    <property type="entry name" value="citD"/>
    <property type="match status" value="1"/>
</dbReference>
<dbReference type="NCBIfam" id="NF009726">
    <property type="entry name" value="PRK13253.1"/>
    <property type="match status" value="1"/>
</dbReference>
<dbReference type="Pfam" id="PF06857">
    <property type="entry name" value="ACP"/>
    <property type="match status" value="1"/>
</dbReference>
<dbReference type="PIRSF" id="PIRSF002736">
    <property type="entry name" value="Citrt_lyas_gamma"/>
    <property type="match status" value="1"/>
</dbReference>
<name>CITD_KLEP7</name>
<reference key="1">
    <citation type="submission" date="2006-09" db="EMBL/GenBank/DDBJ databases">
        <authorList>
            <consortium name="The Klebsiella pneumonia Genome Sequencing Project"/>
            <person name="McClelland M."/>
            <person name="Sanderson E.K."/>
            <person name="Spieth J."/>
            <person name="Clifton W.S."/>
            <person name="Latreille P."/>
            <person name="Sabo A."/>
            <person name="Pepin K."/>
            <person name="Bhonagiri V."/>
            <person name="Porwollik S."/>
            <person name="Ali J."/>
            <person name="Wilson R.K."/>
        </authorList>
    </citation>
    <scope>NUCLEOTIDE SEQUENCE [LARGE SCALE GENOMIC DNA]</scope>
    <source>
        <strain>ATCC 700721 / MGH 78578</strain>
    </source>
</reference>
<feature type="chain" id="PRO_1000047072" description="Citrate lyase acyl carrier protein">
    <location>
        <begin position="1"/>
        <end position="97"/>
    </location>
</feature>
<feature type="modified residue" description="O-(phosphoribosyl dephospho-coenzyme A)serine" evidence="1">
    <location>
        <position position="14"/>
    </location>
</feature>
<comment type="function">
    <text evidence="1">Covalent carrier of the coenzyme of citrate lyase.</text>
</comment>
<comment type="subunit">
    <text evidence="1">Oligomer with a subunit composition of (alpha,beta,gamma)6.</text>
</comment>
<comment type="subcellular location">
    <subcellularLocation>
        <location evidence="1">Cytoplasm</location>
    </subcellularLocation>
</comment>
<comment type="similarity">
    <text evidence="1">Belongs to the CitD family.</text>
</comment>
<evidence type="ECO:0000255" key="1">
    <source>
        <dbReference type="HAMAP-Rule" id="MF_00805"/>
    </source>
</evidence>
<gene>
    <name evidence="1" type="primary">citD</name>
    <name type="ordered locus">KPN78578_00340</name>
    <name type="ORF">KPN_00035</name>
</gene>
<sequence length="97" mass="10427">MEMKIDALAGTLESSDVMVRIGPAAQPGIQLEIDSIVKQQFGAAIEQVVRETLAQLGVKQANVVVDDKGALECVLRARVQAAALRAAQQTQLQWSQL</sequence>
<keyword id="KW-0963">Cytoplasm</keyword>
<keyword id="KW-0597">Phosphoprotein</keyword>
<organism>
    <name type="scientific">Klebsiella pneumoniae subsp. pneumoniae (strain ATCC 700721 / MGH 78578)</name>
    <dbReference type="NCBI Taxonomy" id="272620"/>
    <lineage>
        <taxon>Bacteria</taxon>
        <taxon>Pseudomonadati</taxon>
        <taxon>Pseudomonadota</taxon>
        <taxon>Gammaproteobacteria</taxon>
        <taxon>Enterobacterales</taxon>
        <taxon>Enterobacteriaceae</taxon>
        <taxon>Klebsiella/Raoultella group</taxon>
        <taxon>Klebsiella</taxon>
        <taxon>Klebsiella pneumoniae complex</taxon>
    </lineage>
</organism>